<accession>A4SRW7</accession>
<evidence type="ECO:0000255" key="1">
    <source>
        <dbReference type="HAMAP-Rule" id="MF_00142"/>
    </source>
</evidence>
<reference key="1">
    <citation type="journal article" date="2008" name="BMC Genomics">
        <title>The genome of Aeromonas salmonicida subsp. salmonicida A449: insights into the evolution of a fish pathogen.</title>
        <authorList>
            <person name="Reith M.E."/>
            <person name="Singh R.K."/>
            <person name="Curtis B."/>
            <person name="Boyd J.M."/>
            <person name="Bouevitch A."/>
            <person name="Kimball J."/>
            <person name="Munholland J."/>
            <person name="Murphy C."/>
            <person name="Sarty D."/>
            <person name="Williams J."/>
            <person name="Nash J.H."/>
            <person name="Johnson S.C."/>
            <person name="Brown L.L."/>
        </authorList>
    </citation>
    <scope>NUCLEOTIDE SEQUENCE [LARGE SCALE GENOMIC DNA]</scope>
    <source>
        <strain>A449</strain>
    </source>
</reference>
<protein>
    <recommendedName>
        <fullName evidence="1">Iron-sulfur cluster assembly protein CyaY</fullName>
    </recommendedName>
</protein>
<comment type="function">
    <text evidence="1">Involved in iron-sulfur (Fe-S) cluster assembly. May act as a regulator of Fe-S biogenesis.</text>
</comment>
<comment type="similarity">
    <text evidence="1">Belongs to the frataxin family.</text>
</comment>
<keyword id="KW-0408">Iron</keyword>
<keyword id="KW-0479">Metal-binding</keyword>
<feature type="chain" id="PRO_1000010910" description="Iron-sulfur cluster assembly protein CyaY">
    <location>
        <begin position="1"/>
        <end position="104"/>
    </location>
</feature>
<name>CYAY_AERS4</name>
<proteinExistence type="inferred from homology"/>
<gene>
    <name evidence="1" type="primary">cyaY</name>
    <name type="ordered locus">ASA_3678</name>
</gene>
<organism>
    <name type="scientific">Aeromonas salmonicida (strain A449)</name>
    <dbReference type="NCBI Taxonomy" id="382245"/>
    <lineage>
        <taxon>Bacteria</taxon>
        <taxon>Pseudomonadati</taxon>
        <taxon>Pseudomonadota</taxon>
        <taxon>Gammaproteobacteria</taxon>
        <taxon>Aeromonadales</taxon>
        <taxon>Aeromonadaceae</taxon>
        <taxon>Aeromonas</taxon>
    </lineage>
</organism>
<dbReference type="EMBL" id="CP000644">
    <property type="protein sequence ID" value="ABO91639.1"/>
    <property type="molecule type" value="Genomic_DNA"/>
</dbReference>
<dbReference type="RefSeq" id="WP_005316166.1">
    <property type="nucleotide sequence ID" value="NC_009348.1"/>
</dbReference>
<dbReference type="SMR" id="A4SRW7"/>
<dbReference type="STRING" id="29491.GCA_000820065_04329"/>
<dbReference type="KEGG" id="asa:ASA_3678"/>
<dbReference type="eggNOG" id="COG1965">
    <property type="taxonomic scope" value="Bacteria"/>
</dbReference>
<dbReference type="HOGENOM" id="CLU_080880_3_0_6"/>
<dbReference type="Proteomes" id="UP000000225">
    <property type="component" value="Chromosome"/>
</dbReference>
<dbReference type="GO" id="GO:0005829">
    <property type="term" value="C:cytosol"/>
    <property type="evidence" value="ECO:0007669"/>
    <property type="project" value="TreeGrafter"/>
</dbReference>
<dbReference type="GO" id="GO:0008199">
    <property type="term" value="F:ferric iron binding"/>
    <property type="evidence" value="ECO:0007669"/>
    <property type="project" value="InterPro"/>
</dbReference>
<dbReference type="GO" id="GO:0008198">
    <property type="term" value="F:ferrous iron binding"/>
    <property type="evidence" value="ECO:0007669"/>
    <property type="project" value="TreeGrafter"/>
</dbReference>
<dbReference type="GO" id="GO:0016226">
    <property type="term" value="P:iron-sulfur cluster assembly"/>
    <property type="evidence" value="ECO:0007669"/>
    <property type="project" value="UniProtKB-UniRule"/>
</dbReference>
<dbReference type="CDD" id="cd00503">
    <property type="entry name" value="Frataxin"/>
    <property type="match status" value="1"/>
</dbReference>
<dbReference type="Gene3D" id="3.30.920.10">
    <property type="entry name" value="Frataxin/CyaY"/>
    <property type="match status" value="1"/>
</dbReference>
<dbReference type="HAMAP" id="MF_00142">
    <property type="entry name" value="CyaY"/>
    <property type="match status" value="1"/>
</dbReference>
<dbReference type="InterPro" id="IPR047584">
    <property type="entry name" value="CyaY"/>
</dbReference>
<dbReference type="InterPro" id="IPR002908">
    <property type="entry name" value="Frataxin/CyaY"/>
</dbReference>
<dbReference type="InterPro" id="IPR036524">
    <property type="entry name" value="Frataxin/CyaY_sf"/>
</dbReference>
<dbReference type="InterPro" id="IPR020895">
    <property type="entry name" value="Frataxin_CS"/>
</dbReference>
<dbReference type="NCBIfam" id="TIGR03421">
    <property type="entry name" value="FeS_CyaY"/>
    <property type="match status" value="1"/>
</dbReference>
<dbReference type="PANTHER" id="PTHR16821">
    <property type="entry name" value="FRATAXIN"/>
    <property type="match status" value="1"/>
</dbReference>
<dbReference type="PANTHER" id="PTHR16821:SF2">
    <property type="entry name" value="FRATAXIN, MITOCHONDRIAL"/>
    <property type="match status" value="1"/>
</dbReference>
<dbReference type="Pfam" id="PF01491">
    <property type="entry name" value="Frataxin_Cyay"/>
    <property type="match status" value="1"/>
</dbReference>
<dbReference type="SMART" id="SM01219">
    <property type="entry name" value="Frataxin_Cyay"/>
    <property type="match status" value="1"/>
</dbReference>
<dbReference type="SUPFAM" id="SSF55387">
    <property type="entry name" value="Frataxin/Nqo15-like"/>
    <property type="match status" value="1"/>
</dbReference>
<dbReference type="PROSITE" id="PS01344">
    <property type="entry name" value="FRATAXIN_1"/>
    <property type="match status" value="1"/>
</dbReference>
<dbReference type="PROSITE" id="PS50810">
    <property type="entry name" value="FRATAXIN_2"/>
    <property type="match status" value="1"/>
</dbReference>
<sequence>MKDHEYHALTDAFFQYVEDTVDAGYPDIDCERAGGVLTLSFENKTKVIINKQEPLHQIWVATRENGFHFELQGETWIDNRFGHELKALLTKACTTQAGESVVFP</sequence>